<protein>
    <recommendedName>
        <fullName evidence="2">NEDD4-binding protein 1</fullName>
        <shortName evidence="2">N4BP1</shortName>
        <ecNumber evidence="1">3.1.-.-</ecNumber>
    </recommendedName>
</protein>
<feature type="chain" id="PRO_0000301989" description="NEDD4-binding protein 1">
    <location>
        <begin position="1"/>
        <end position="819"/>
    </location>
</feature>
<feature type="domain" description="KH-like" evidence="3">
    <location>
        <begin position="80"/>
        <end position="164"/>
    </location>
</feature>
<feature type="domain" description="RNase NYN" evidence="3">
    <location>
        <begin position="517"/>
        <end position="669"/>
    </location>
</feature>
<feature type="region of interest" description="Disordered" evidence="4">
    <location>
        <begin position="1"/>
        <end position="20"/>
    </location>
</feature>
<feature type="region of interest" description="Disordered" evidence="4">
    <location>
        <begin position="226"/>
        <end position="247"/>
    </location>
</feature>
<feature type="region of interest" description="Disordered" evidence="4">
    <location>
        <begin position="666"/>
        <end position="736"/>
    </location>
</feature>
<feature type="region of interest" description="CoCUN" evidence="1">
    <location>
        <begin position="772"/>
        <end position="819"/>
    </location>
</feature>
<feature type="compositionally biased region" description="Polar residues" evidence="4">
    <location>
        <begin position="1"/>
        <end position="13"/>
    </location>
</feature>
<feature type="compositionally biased region" description="Basic and acidic residues" evidence="4">
    <location>
        <begin position="226"/>
        <end position="241"/>
    </location>
</feature>
<feature type="compositionally biased region" description="Polar residues" evidence="4">
    <location>
        <begin position="673"/>
        <end position="689"/>
    </location>
</feature>
<keyword id="KW-0963">Cytoplasm</keyword>
<keyword id="KW-0378">Hydrolase</keyword>
<keyword id="KW-0391">Immunity</keyword>
<keyword id="KW-0399">Innate immunity</keyword>
<keyword id="KW-0540">Nuclease</keyword>
<keyword id="KW-0539">Nucleus</keyword>
<keyword id="KW-1185">Reference proteome</keyword>
<keyword id="KW-0694">RNA-binding</keyword>
<dbReference type="EC" id="3.1.-.-" evidence="1"/>
<dbReference type="EMBL" id="BC075104">
    <property type="protein sequence ID" value="AAH75104.1"/>
    <property type="molecule type" value="mRNA"/>
</dbReference>
<dbReference type="RefSeq" id="NP_001004870.1">
    <property type="nucleotide sequence ID" value="NM_001004870.1"/>
</dbReference>
<dbReference type="SMR" id="Q6DJS0"/>
<dbReference type="FunCoup" id="Q6DJS0">
    <property type="interactions" value="2961"/>
</dbReference>
<dbReference type="STRING" id="8364.ENSXETP00000029312"/>
<dbReference type="PaxDb" id="8364-ENSXETP00000016323"/>
<dbReference type="DNASU" id="448184"/>
<dbReference type="GeneID" id="448184"/>
<dbReference type="KEGG" id="xtr:448184"/>
<dbReference type="AGR" id="Xenbase:XB-GENE-1216138"/>
<dbReference type="CTD" id="9683"/>
<dbReference type="Xenbase" id="XB-GENE-1216138">
    <property type="gene designation" value="n4bp1"/>
</dbReference>
<dbReference type="eggNOG" id="KOG3777">
    <property type="taxonomic scope" value="Eukaryota"/>
</dbReference>
<dbReference type="InParanoid" id="Q6DJS0"/>
<dbReference type="OMA" id="ICHKRRS"/>
<dbReference type="OrthoDB" id="392925at2759"/>
<dbReference type="PhylomeDB" id="Q6DJS0"/>
<dbReference type="TreeFam" id="TF315783"/>
<dbReference type="Reactome" id="R-XTR-9758274">
    <property type="pathway name" value="Regulation of NF-kappa B signaling"/>
</dbReference>
<dbReference type="Proteomes" id="UP000008143">
    <property type="component" value="Chromosome 4"/>
</dbReference>
<dbReference type="Bgee" id="ENSXETG00000025007">
    <property type="expression patterns" value="Expressed in testis and 12 other cell types or tissues"/>
</dbReference>
<dbReference type="GO" id="GO:0005829">
    <property type="term" value="C:cytosol"/>
    <property type="evidence" value="ECO:0000250"/>
    <property type="project" value="UniProtKB"/>
</dbReference>
<dbReference type="GO" id="GO:0005730">
    <property type="term" value="C:nucleolus"/>
    <property type="evidence" value="ECO:0000250"/>
    <property type="project" value="UniProtKB"/>
</dbReference>
<dbReference type="GO" id="GO:0016605">
    <property type="term" value="C:PML body"/>
    <property type="evidence" value="ECO:0000250"/>
    <property type="project" value="UniProtKB"/>
</dbReference>
<dbReference type="GO" id="GO:0003729">
    <property type="term" value="F:mRNA binding"/>
    <property type="evidence" value="ECO:0000250"/>
    <property type="project" value="UniProtKB"/>
</dbReference>
<dbReference type="GO" id="GO:0004540">
    <property type="term" value="F:RNA nuclease activity"/>
    <property type="evidence" value="ECO:0000250"/>
    <property type="project" value="UniProtKB"/>
</dbReference>
<dbReference type="GO" id="GO:0043130">
    <property type="term" value="F:ubiquitin binding"/>
    <property type="evidence" value="ECO:0000250"/>
    <property type="project" value="UniProtKB"/>
</dbReference>
<dbReference type="GO" id="GO:0045087">
    <property type="term" value="P:innate immune response"/>
    <property type="evidence" value="ECO:0007669"/>
    <property type="project" value="UniProtKB-KW"/>
</dbReference>
<dbReference type="GO" id="GO:0001818">
    <property type="term" value="P:negative regulation of cytokine production"/>
    <property type="evidence" value="ECO:0000250"/>
    <property type="project" value="UniProtKB"/>
</dbReference>
<dbReference type="GO" id="GO:0032435">
    <property type="term" value="P:negative regulation of proteasomal ubiquitin-dependent protein catabolic process"/>
    <property type="evidence" value="ECO:0000250"/>
    <property type="project" value="UniProtKB"/>
</dbReference>
<dbReference type="GO" id="GO:0031397">
    <property type="term" value="P:negative regulation of protein ubiquitination"/>
    <property type="evidence" value="ECO:0000250"/>
    <property type="project" value="UniProtKB"/>
</dbReference>
<dbReference type="GO" id="GO:0045071">
    <property type="term" value="P:negative regulation of viral genome replication"/>
    <property type="evidence" value="ECO:0000250"/>
    <property type="project" value="UniProtKB"/>
</dbReference>
<dbReference type="GO" id="GO:0045088">
    <property type="term" value="P:regulation of innate immune response"/>
    <property type="evidence" value="ECO:0000250"/>
    <property type="project" value="UniProtKB"/>
</dbReference>
<dbReference type="CDD" id="cd22476">
    <property type="entry name" value="KH-I_N4BP1"/>
    <property type="match status" value="1"/>
</dbReference>
<dbReference type="CDD" id="cd09032">
    <property type="entry name" value="KH-I_N4BP1_like_rpt1"/>
    <property type="match status" value="1"/>
</dbReference>
<dbReference type="CDD" id="cd18728">
    <property type="entry name" value="PIN_N4BP1-like"/>
    <property type="match status" value="1"/>
</dbReference>
<dbReference type="FunFam" id="3.40.50.11980:FF:000001">
    <property type="entry name" value="ZC3H12A isoform 1"/>
    <property type="match status" value="1"/>
</dbReference>
<dbReference type="Gene3D" id="3.40.50.11980">
    <property type="match status" value="1"/>
</dbReference>
<dbReference type="InterPro" id="IPR056629">
    <property type="entry name" value="KH_N4BP1_1st"/>
</dbReference>
<dbReference type="InterPro" id="IPR056630">
    <property type="entry name" value="KH_N4BP1_2nd"/>
</dbReference>
<dbReference type="InterPro" id="IPR021869">
    <property type="entry name" value="RNase_Zc3h12_NYN"/>
</dbReference>
<dbReference type="InterPro" id="IPR056631">
    <property type="entry name" value="UBA_N4BP1"/>
</dbReference>
<dbReference type="InterPro" id="IPR056578">
    <property type="entry name" value="UBA_N4BP1_C"/>
</dbReference>
<dbReference type="InterPro" id="IPR051101">
    <property type="entry name" value="ZC3H12/N4BP1_RNase_Reg"/>
</dbReference>
<dbReference type="PANTHER" id="PTHR12876">
    <property type="entry name" value="N4BP1-RELATED"/>
    <property type="match status" value="1"/>
</dbReference>
<dbReference type="PANTHER" id="PTHR12876:SF26">
    <property type="entry name" value="NEDD4-BINDING PROTEIN 1"/>
    <property type="match status" value="1"/>
</dbReference>
<dbReference type="Pfam" id="PF23050">
    <property type="entry name" value="KH_N4BP1_1st"/>
    <property type="match status" value="1"/>
</dbReference>
<dbReference type="Pfam" id="PF23052">
    <property type="entry name" value="KH_N4BP1_2nd"/>
    <property type="match status" value="1"/>
</dbReference>
<dbReference type="Pfam" id="PF11977">
    <property type="entry name" value="RNase_Zc3h12a"/>
    <property type="match status" value="1"/>
</dbReference>
<dbReference type="Pfam" id="PF23053">
    <property type="entry name" value="UBA_N4BP1"/>
    <property type="match status" value="1"/>
</dbReference>
<dbReference type="Pfam" id="PF23054">
    <property type="entry name" value="UBA_N4BP1_C"/>
    <property type="match status" value="1"/>
</dbReference>
<reference key="1">
    <citation type="submission" date="2004-06" db="EMBL/GenBank/DDBJ databases">
        <authorList>
            <consortium name="NIH - Xenopus Gene Collection (XGC) project"/>
        </authorList>
    </citation>
    <scope>NUCLEOTIDE SEQUENCE [LARGE SCALE MRNA]</scope>
    <source>
        <tissue>Embryo</tissue>
    </source>
</reference>
<gene>
    <name evidence="2" type="primary">n4bp1</name>
</gene>
<sequence>MASGSVQSSSGNGRRQAAVVDEFTVPGDKRSLLEKSRPRIQALFPVLFTVLGSLETFQQSEVKEDEEKPGRIWLQLKGEKQAVRRAKEYVKGICEPELEEKQSYPKEMHCIFAGAQSSFLNHLIQDTCADVALSDIGVLGIKGATEPVVMAQSRVQQFIALFKDNLSLPSHKEPAVKKKFKLYVEKHVDKYTVDLLLLPSALKSELLSLACDNQLSCEDLSRQSSDDKAECKVNQKDEVSRKGAGTPVTELTSQLDSVFSSAAEDSPCLIECPYSEQDRLSVKRRSSEAEERFSKKPFSLEAVQVDGPVNRNADKNNVPIIDLISEPSDFEDSVIVVEADDCVSSETEYKILVNFFKTMGYSQIVVEKVIDDLGQSEEPLKLLEEIEKQSKKELSVPFSQSSSYSTDLLKARGTSSLPKCKIAIAETVQSAAPSKVQPKALLATDKAGPSNPFCYKSQTKATVVNPIPTDQTTIVAPAERAFNNHFDPPLTGVQIFQNSLKVQYRLELKNEPGRWDLKHIIIDGSNVAMSHGLQRFFSCRGIALAVEYFWKKGHRNITVFVPQWRTKRDPFITEQHFLQQLQELGILSFTPSRTVLGARIASHDDRFLLHLAERTGGIIITNDNFREFVVESPSWREIIKERLLQYTFAGDIFMLPDDPLGRYGPKLDDFLSKQPNNRTVHSSFPSSNERFVPRDQFAPPRNMAPKTGLNQPMAPRAGHNQPMAPRAGHNQPMAPRTGLSQHRFLQLIKPQEPFTPALHNIARPCPIMPPERSPSETMQLKEALLKIFPEADQRHKINEILTAHPFMRDLNALSAMVLD</sequence>
<proteinExistence type="evidence at transcript level"/>
<evidence type="ECO:0000250" key="1">
    <source>
        <dbReference type="UniProtKB" id="O75113"/>
    </source>
</evidence>
<evidence type="ECO:0000250" key="2">
    <source>
        <dbReference type="UniProtKB" id="Q6A037"/>
    </source>
</evidence>
<evidence type="ECO:0000255" key="3"/>
<evidence type="ECO:0000256" key="4">
    <source>
        <dbReference type="SAM" id="MobiDB-lite"/>
    </source>
</evidence>
<evidence type="ECO:0000305" key="5"/>
<organism>
    <name type="scientific">Xenopus tropicalis</name>
    <name type="common">Western clawed frog</name>
    <name type="synonym">Silurana tropicalis</name>
    <dbReference type="NCBI Taxonomy" id="8364"/>
    <lineage>
        <taxon>Eukaryota</taxon>
        <taxon>Metazoa</taxon>
        <taxon>Chordata</taxon>
        <taxon>Craniata</taxon>
        <taxon>Vertebrata</taxon>
        <taxon>Euteleostomi</taxon>
        <taxon>Amphibia</taxon>
        <taxon>Batrachia</taxon>
        <taxon>Anura</taxon>
        <taxon>Pipoidea</taxon>
        <taxon>Pipidae</taxon>
        <taxon>Xenopodinae</taxon>
        <taxon>Xenopus</taxon>
        <taxon>Silurana</taxon>
    </lineage>
</organism>
<accession>Q6DJS0</accession>
<name>N4BP1_XENTR</name>
<comment type="function">
    <text evidence="1 2">Potent suppressor of cytokine production that acts as a regulator of innate immune signaling and inflammation. Acts as a key negative regulator of select cytokine and chemokine responses elicited by TRIF-independent Toll-like receptors (TLRs), thereby limiting inflammatory cytokine responses to minor insults (By similarity). Has ribonuclease activity (By similarity).</text>
</comment>
<comment type="subcellular location">
    <subcellularLocation>
        <location evidence="2">Cytoplasm</location>
        <location evidence="2">Cytosol</location>
    </subcellularLocation>
    <subcellularLocation>
        <location evidence="2">Nucleus</location>
    </subcellularLocation>
    <subcellularLocation>
        <location evidence="2">Nucleus</location>
        <location evidence="2">Nucleolus</location>
    </subcellularLocation>
    <subcellularLocation>
        <location evidence="2">Nucleus</location>
        <location evidence="2">PML body</location>
    </subcellularLocation>
    <text evidence="2">Primarily localizes to the nucleolus. Also localizes to the PML nuclear bodies, when desumoylated.</text>
</comment>
<comment type="similarity">
    <text evidence="5">Belongs to the N4BP1 family.</text>
</comment>